<sequence>MFRFMRDVEPEDPMFLMDPFAIHRQHMSRMLSGGFGYSPFLSITDGNMPATRPASRRMQAGAVSPFGMLGMSGGFMDMFGMMNDMIGNMEHMAAGGNCQTFSSSTVISYSNTGDGAPKVYQETSEMRSAPGGIRETRRTVRDSDSGLEQMSIGHHIRDRAHILQRSRNHRTGDQEERQDYINLDESEAAAFDDEWRRETSRYRQQRPLEFRRHEASVGGGRRAEGPPRLAIQGPEDSPSRQSRRYDW</sequence>
<comment type="subcellular location">
    <subcellularLocation>
        <location evidence="1">Cytoplasm</location>
    </subcellularLocation>
    <subcellularLocation>
        <location evidence="1">Nucleus</location>
    </subcellularLocation>
</comment>
<comment type="similarity">
    <text evidence="4">Belongs to the MLF family.</text>
</comment>
<gene>
    <name type="primary">Mlf2</name>
</gene>
<organism>
    <name type="scientific">Mus musculus</name>
    <name type="common">Mouse</name>
    <dbReference type="NCBI Taxonomy" id="10090"/>
    <lineage>
        <taxon>Eukaryota</taxon>
        <taxon>Metazoa</taxon>
        <taxon>Chordata</taxon>
        <taxon>Craniata</taxon>
        <taxon>Vertebrata</taxon>
        <taxon>Euteleostomi</taxon>
        <taxon>Mammalia</taxon>
        <taxon>Eutheria</taxon>
        <taxon>Euarchontoglires</taxon>
        <taxon>Glires</taxon>
        <taxon>Rodentia</taxon>
        <taxon>Myomorpha</taxon>
        <taxon>Muroidea</taxon>
        <taxon>Muridae</taxon>
        <taxon>Murinae</taxon>
        <taxon>Mus</taxon>
        <taxon>Mus</taxon>
    </lineage>
</organism>
<evidence type="ECO:0000250" key="1"/>
<evidence type="ECO:0000250" key="2">
    <source>
        <dbReference type="UniProtKB" id="Q15773"/>
    </source>
</evidence>
<evidence type="ECO:0000256" key="3">
    <source>
        <dbReference type="SAM" id="MobiDB-lite"/>
    </source>
</evidence>
<evidence type="ECO:0000305" key="4"/>
<evidence type="ECO:0007744" key="5">
    <source>
    </source>
</evidence>
<reference key="1">
    <citation type="journal article" date="2004" name="Genome Res.">
        <title>The status, quality, and expansion of the NIH full-length cDNA project: the Mammalian Gene Collection (MGC).</title>
        <authorList>
            <consortium name="The MGC Project Team"/>
        </authorList>
    </citation>
    <scope>NUCLEOTIDE SEQUENCE [LARGE SCALE MRNA]</scope>
    <source>
        <tissue>Mammary tumor</tissue>
    </source>
</reference>
<reference key="2">
    <citation type="journal article" date="2006" name="Mol. Cell. Proteomics">
        <title>Comprehensive identification of phosphorylation sites in postsynaptic density preparations.</title>
        <authorList>
            <person name="Trinidad J.C."/>
            <person name="Specht C.G."/>
            <person name="Thalhammer A."/>
            <person name="Schoepfer R."/>
            <person name="Burlingame A.L."/>
        </authorList>
    </citation>
    <scope>IDENTIFICATION BY MASS SPECTROMETRY [LARGE SCALE ANALYSIS]</scope>
    <source>
        <tissue>Brain</tissue>
    </source>
</reference>
<reference key="3">
    <citation type="journal article" date="2010" name="Cell">
        <title>A tissue-specific atlas of mouse protein phosphorylation and expression.</title>
        <authorList>
            <person name="Huttlin E.L."/>
            <person name="Jedrychowski M.P."/>
            <person name="Elias J.E."/>
            <person name="Goswami T."/>
            <person name="Rad R."/>
            <person name="Beausoleil S.A."/>
            <person name="Villen J."/>
            <person name="Haas W."/>
            <person name="Sowa M.E."/>
            <person name="Gygi S.P."/>
        </authorList>
    </citation>
    <scope>PHOSPHORYLATION [LARGE SCALE ANALYSIS] AT SER-237</scope>
    <scope>IDENTIFICATION BY MASS SPECTROMETRY [LARGE SCALE ANALYSIS]</scope>
    <source>
        <tissue>Brain</tissue>
        <tissue>Lung</tissue>
        <tissue>Spleen</tissue>
        <tissue>Testis</tissue>
    </source>
</reference>
<dbReference type="EMBL" id="BC003975">
    <property type="protein sequence ID" value="AAH03975.1"/>
    <property type="molecule type" value="mRNA"/>
</dbReference>
<dbReference type="CCDS" id="CCDS20538.1"/>
<dbReference type="RefSeq" id="NP_001163812.1">
    <property type="nucleotide sequence ID" value="NM_001170341.1"/>
</dbReference>
<dbReference type="RefSeq" id="NP_663360.1">
    <property type="nucleotide sequence ID" value="NM_145385.2"/>
</dbReference>
<dbReference type="SMR" id="Q99KX1"/>
<dbReference type="BioGRID" id="205980">
    <property type="interactions" value="10"/>
</dbReference>
<dbReference type="FunCoup" id="Q99KX1">
    <property type="interactions" value="3012"/>
</dbReference>
<dbReference type="IntAct" id="Q99KX1">
    <property type="interactions" value="4"/>
</dbReference>
<dbReference type="MINT" id="Q99KX1"/>
<dbReference type="STRING" id="10090.ENSMUSP00000135920"/>
<dbReference type="GlyGen" id="Q99KX1">
    <property type="glycosylation" value="1 site, 1 O-linked glycan (1 site)"/>
</dbReference>
<dbReference type="iPTMnet" id="Q99KX1"/>
<dbReference type="PhosphoSitePlus" id="Q99KX1"/>
<dbReference type="SwissPalm" id="Q99KX1"/>
<dbReference type="jPOST" id="Q99KX1"/>
<dbReference type="PaxDb" id="10090-ENSMUSP00000032214"/>
<dbReference type="ProteomicsDB" id="290085"/>
<dbReference type="Pumba" id="Q99KX1"/>
<dbReference type="Antibodypedia" id="2268">
    <property type="antibodies" value="260 antibodies from 28 providers"/>
</dbReference>
<dbReference type="DNASU" id="30853"/>
<dbReference type="Ensembl" id="ENSMUST00000032214.14">
    <property type="protein sequence ID" value="ENSMUSP00000032214.8"/>
    <property type="gene ID" value="ENSMUSG00000030120.15"/>
</dbReference>
<dbReference type="Ensembl" id="ENSMUST00000180095.4">
    <property type="protein sequence ID" value="ENSMUSP00000135920.2"/>
    <property type="gene ID" value="ENSMUSG00000030120.15"/>
</dbReference>
<dbReference type="GeneID" id="30853"/>
<dbReference type="KEGG" id="mmu:30853"/>
<dbReference type="UCSC" id="uc009dso.2">
    <property type="organism name" value="mouse"/>
</dbReference>
<dbReference type="AGR" id="MGI:1353554"/>
<dbReference type="CTD" id="8079"/>
<dbReference type="MGI" id="MGI:1353554">
    <property type="gene designation" value="Mlf2"/>
</dbReference>
<dbReference type="VEuPathDB" id="HostDB:ENSMUSG00000030120"/>
<dbReference type="eggNOG" id="KOG4049">
    <property type="taxonomic scope" value="Eukaryota"/>
</dbReference>
<dbReference type="GeneTree" id="ENSGT00390000005023"/>
<dbReference type="HOGENOM" id="CLU_063313_3_0_1"/>
<dbReference type="InParanoid" id="Q99KX1"/>
<dbReference type="OMA" id="FDNEWRR"/>
<dbReference type="OrthoDB" id="8707547at2759"/>
<dbReference type="PhylomeDB" id="Q99KX1"/>
<dbReference type="TreeFam" id="TF317561"/>
<dbReference type="BioGRID-ORCS" id="30853">
    <property type="hits" value="0 hits in 76 CRISPR screens"/>
</dbReference>
<dbReference type="CD-CODE" id="CE726F99">
    <property type="entry name" value="Postsynaptic density"/>
</dbReference>
<dbReference type="ChiTaRS" id="Mlf2">
    <property type="organism name" value="mouse"/>
</dbReference>
<dbReference type="PRO" id="PR:Q99KX1"/>
<dbReference type="Proteomes" id="UP000000589">
    <property type="component" value="Chromosome 6"/>
</dbReference>
<dbReference type="RNAct" id="Q99KX1">
    <property type="molecule type" value="protein"/>
</dbReference>
<dbReference type="Bgee" id="ENSMUSG00000030120">
    <property type="expression patterns" value="Expressed in embryonic brain and 256 other cell types or tissues"/>
</dbReference>
<dbReference type="ExpressionAtlas" id="Q99KX1">
    <property type="expression patterns" value="baseline and differential"/>
</dbReference>
<dbReference type="GO" id="GO:0005737">
    <property type="term" value="C:cytoplasm"/>
    <property type="evidence" value="ECO:0007669"/>
    <property type="project" value="UniProtKB-SubCell"/>
</dbReference>
<dbReference type="GO" id="GO:0098978">
    <property type="term" value="C:glutamatergic synapse"/>
    <property type="evidence" value="ECO:0000314"/>
    <property type="project" value="SynGO"/>
</dbReference>
<dbReference type="GO" id="GO:0005634">
    <property type="term" value="C:nucleus"/>
    <property type="evidence" value="ECO:0000314"/>
    <property type="project" value="MGI"/>
</dbReference>
<dbReference type="GO" id="GO:0045202">
    <property type="term" value="C:synapse"/>
    <property type="evidence" value="ECO:0000314"/>
    <property type="project" value="SynGO"/>
</dbReference>
<dbReference type="InterPro" id="IPR019376">
    <property type="entry name" value="Myeloid_leukemia_factor"/>
</dbReference>
<dbReference type="PANTHER" id="PTHR13105">
    <property type="entry name" value="MYELOID LEUKEMIA FACTOR"/>
    <property type="match status" value="1"/>
</dbReference>
<dbReference type="Pfam" id="PF10248">
    <property type="entry name" value="Mlf1IP"/>
    <property type="match status" value="1"/>
</dbReference>
<keyword id="KW-0963">Cytoplasm</keyword>
<keyword id="KW-0539">Nucleus</keyword>
<keyword id="KW-0597">Phosphoprotein</keyword>
<keyword id="KW-1185">Reference proteome</keyword>
<name>MLF2_MOUSE</name>
<proteinExistence type="evidence at protein level"/>
<feature type="chain" id="PRO_0000220755" description="Myeloid leukemia factor 2">
    <location>
        <begin position="1"/>
        <end position="247"/>
    </location>
</feature>
<feature type="region of interest" description="Disordered" evidence="3">
    <location>
        <begin position="122"/>
        <end position="247"/>
    </location>
</feature>
<feature type="compositionally biased region" description="Basic and acidic residues" evidence="3">
    <location>
        <begin position="134"/>
        <end position="144"/>
    </location>
</feature>
<feature type="compositionally biased region" description="Basic residues" evidence="3">
    <location>
        <begin position="154"/>
        <end position="169"/>
    </location>
</feature>
<feature type="compositionally biased region" description="Basic and acidic residues" evidence="3">
    <location>
        <begin position="170"/>
        <end position="179"/>
    </location>
</feature>
<feature type="compositionally biased region" description="Acidic residues" evidence="3">
    <location>
        <begin position="182"/>
        <end position="192"/>
    </location>
</feature>
<feature type="compositionally biased region" description="Basic and acidic residues" evidence="3">
    <location>
        <begin position="193"/>
        <end position="225"/>
    </location>
</feature>
<feature type="modified residue" description="Phosphoserine" evidence="2">
    <location>
        <position position="216"/>
    </location>
</feature>
<feature type="modified residue" description="Phosphoserine" evidence="5">
    <location>
        <position position="237"/>
    </location>
</feature>
<feature type="modified residue" description="Phosphoserine" evidence="2">
    <location>
        <position position="239"/>
    </location>
</feature>
<protein>
    <recommendedName>
        <fullName>Myeloid leukemia factor 2</fullName>
    </recommendedName>
    <alternativeName>
        <fullName>Myelodysplasia-myeloid leukemia factor 2</fullName>
    </alternativeName>
</protein>
<accession>Q99KX1</accession>